<comment type="function">
    <text evidence="1 5">May be involved in several stages of intracellular trafficking. May play a role in endosome homeostasis (By similarity). Acts as a GAP for Galphas.</text>
</comment>
<comment type="subcellular location">
    <subcellularLocation>
        <location evidence="5">Early endosome membrane</location>
        <topology evidence="5">Peripheral membrane protein</topology>
        <orientation evidence="5">Cytoplasmic side</orientation>
    </subcellularLocation>
</comment>
<comment type="alternative products">
    <event type="alternative splicing"/>
    <isoform>
        <id>Q9Y5W8-1</id>
        <name>1</name>
        <sequence type="displayed"/>
    </isoform>
    <isoform>
        <id>Q9Y5W8-2</id>
        <name>2</name>
        <sequence type="described" ref="VSP_006192"/>
    </isoform>
</comment>
<comment type="domain">
    <text evidence="5">The PX domain mediates interaction with membranes enriched in phosphatidylinositol 3-phosphate.</text>
</comment>
<comment type="miscellaneous">
    <molecule>Isoform 2</molecule>
    <text evidence="8">May be produced at very low levels due to a premature stop codon in the mRNA, leading to nonsense-mediated mRNA decay.</text>
</comment>
<comment type="similarity">
    <text evidence="8">Belongs to the sorting nexin family.</text>
</comment>
<comment type="sequence caution" evidence="8">
    <conflict type="erroneous initiation">
        <sequence resource="EMBL-CDS" id="AAH22060"/>
    </conflict>
</comment>
<comment type="sequence caution" evidence="8">
    <conflict type="frameshift">
        <sequence resource="EMBL-CDS" id="BAA34433"/>
    </conflict>
</comment>
<gene>
    <name type="primary">SNX13</name>
    <name type="synonym">KIAA0713</name>
</gene>
<reference key="1">
    <citation type="journal article" date="2001" name="Science">
        <title>RGS-PX1, a GAP for GalphaS and sorting nexin in vesicular trafficking.</title>
        <authorList>
            <person name="Zheng B."/>
            <person name="Ma Y.C."/>
            <person name="Ostrom R.S."/>
            <person name="Lavoie C."/>
            <person name="Gill G.N."/>
            <person name="Insel P.A."/>
            <person name="Huang X.Y."/>
            <person name="Farquhar M.G."/>
        </authorList>
    </citation>
    <scope>NUCLEOTIDE SEQUENCE [MRNA] (ISOFORM 2)</scope>
    <scope>FUNCTION</scope>
    <scope>INTERACTION WITH G PROTEIN-COUPLED RECEPTORS</scope>
    <scope>DOMAIN PX</scope>
    <scope>SUBCELLULAR LOCATION</scope>
</reference>
<reference key="2">
    <citation type="journal article" date="1998" name="DNA Res.">
        <title>Prediction of the coding sequences of unidentified human genes. XI. The complete sequences of 100 new cDNA clones from brain which code for large proteins in vitro.</title>
        <authorList>
            <person name="Nagase T."/>
            <person name="Ishikawa K."/>
            <person name="Suyama M."/>
            <person name="Kikuno R."/>
            <person name="Miyajima N."/>
            <person name="Tanaka A."/>
            <person name="Kotani H."/>
            <person name="Nomura N."/>
            <person name="Ohara O."/>
        </authorList>
    </citation>
    <scope>NUCLEOTIDE SEQUENCE [LARGE SCALE MRNA] (ISOFORM 1)</scope>
    <source>
        <tissue>Brain</tissue>
    </source>
</reference>
<reference key="3">
    <citation type="journal article" date="2004" name="Nat. Genet.">
        <title>Complete sequencing and characterization of 21,243 full-length human cDNAs.</title>
        <authorList>
            <person name="Ota T."/>
            <person name="Suzuki Y."/>
            <person name="Nishikawa T."/>
            <person name="Otsuki T."/>
            <person name="Sugiyama T."/>
            <person name="Irie R."/>
            <person name="Wakamatsu A."/>
            <person name="Hayashi K."/>
            <person name="Sato H."/>
            <person name="Nagai K."/>
            <person name="Kimura K."/>
            <person name="Makita H."/>
            <person name="Sekine M."/>
            <person name="Obayashi M."/>
            <person name="Nishi T."/>
            <person name="Shibahara T."/>
            <person name="Tanaka T."/>
            <person name="Ishii S."/>
            <person name="Yamamoto J."/>
            <person name="Saito K."/>
            <person name="Kawai Y."/>
            <person name="Isono Y."/>
            <person name="Nakamura Y."/>
            <person name="Nagahari K."/>
            <person name="Murakami K."/>
            <person name="Yasuda T."/>
            <person name="Iwayanagi T."/>
            <person name="Wagatsuma M."/>
            <person name="Shiratori A."/>
            <person name="Sudo H."/>
            <person name="Hosoiri T."/>
            <person name="Kaku Y."/>
            <person name="Kodaira H."/>
            <person name="Kondo H."/>
            <person name="Sugawara M."/>
            <person name="Takahashi M."/>
            <person name="Kanda K."/>
            <person name="Yokoi T."/>
            <person name="Furuya T."/>
            <person name="Kikkawa E."/>
            <person name="Omura Y."/>
            <person name="Abe K."/>
            <person name="Kamihara K."/>
            <person name="Katsuta N."/>
            <person name="Sato K."/>
            <person name="Tanikawa M."/>
            <person name="Yamazaki M."/>
            <person name="Ninomiya K."/>
            <person name="Ishibashi T."/>
            <person name="Yamashita H."/>
            <person name="Murakawa K."/>
            <person name="Fujimori K."/>
            <person name="Tanai H."/>
            <person name="Kimata M."/>
            <person name="Watanabe M."/>
            <person name="Hiraoka S."/>
            <person name="Chiba Y."/>
            <person name="Ishida S."/>
            <person name="Ono Y."/>
            <person name="Takiguchi S."/>
            <person name="Watanabe S."/>
            <person name="Yosida M."/>
            <person name="Hotuta T."/>
            <person name="Kusano J."/>
            <person name="Kanehori K."/>
            <person name="Takahashi-Fujii A."/>
            <person name="Hara H."/>
            <person name="Tanase T.-O."/>
            <person name="Nomura Y."/>
            <person name="Togiya S."/>
            <person name="Komai F."/>
            <person name="Hara R."/>
            <person name="Takeuchi K."/>
            <person name="Arita M."/>
            <person name="Imose N."/>
            <person name="Musashino K."/>
            <person name="Yuuki H."/>
            <person name="Oshima A."/>
            <person name="Sasaki N."/>
            <person name="Aotsuka S."/>
            <person name="Yoshikawa Y."/>
            <person name="Matsunawa H."/>
            <person name="Ichihara T."/>
            <person name="Shiohata N."/>
            <person name="Sano S."/>
            <person name="Moriya S."/>
            <person name="Momiyama H."/>
            <person name="Satoh N."/>
            <person name="Takami S."/>
            <person name="Terashima Y."/>
            <person name="Suzuki O."/>
            <person name="Nakagawa S."/>
            <person name="Senoh A."/>
            <person name="Mizoguchi H."/>
            <person name="Goto Y."/>
            <person name="Shimizu F."/>
            <person name="Wakebe H."/>
            <person name="Hishigaki H."/>
            <person name="Watanabe T."/>
            <person name="Sugiyama A."/>
            <person name="Takemoto M."/>
            <person name="Kawakami B."/>
            <person name="Yamazaki M."/>
            <person name="Watanabe K."/>
            <person name="Kumagai A."/>
            <person name="Itakura S."/>
            <person name="Fukuzumi Y."/>
            <person name="Fujimori Y."/>
            <person name="Komiyama M."/>
            <person name="Tashiro H."/>
            <person name="Tanigami A."/>
            <person name="Fujiwara T."/>
            <person name="Ono T."/>
            <person name="Yamada K."/>
            <person name="Fujii Y."/>
            <person name="Ozaki K."/>
            <person name="Hirao M."/>
            <person name="Ohmori Y."/>
            <person name="Kawabata A."/>
            <person name="Hikiji T."/>
            <person name="Kobatake N."/>
            <person name="Inagaki H."/>
            <person name="Ikema Y."/>
            <person name="Okamoto S."/>
            <person name="Okitani R."/>
            <person name="Kawakami T."/>
            <person name="Noguchi S."/>
            <person name="Itoh T."/>
            <person name="Shigeta K."/>
            <person name="Senba T."/>
            <person name="Matsumura K."/>
            <person name="Nakajima Y."/>
            <person name="Mizuno T."/>
            <person name="Morinaga M."/>
            <person name="Sasaki M."/>
            <person name="Togashi T."/>
            <person name="Oyama M."/>
            <person name="Hata H."/>
            <person name="Watanabe M."/>
            <person name="Komatsu T."/>
            <person name="Mizushima-Sugano J."/>
            <person name="Satoh T."/>
            <person name="Shirai Y."/>
            <person name="Takahashi Y."/>
            <person name="Nakagawa K."/>
            <person name="Okumura K."/>
            <person name="Nagase T."/>
            <person name="Nomura N."/>
            <person name="Kikuchi H."/>
            <person name="Masuho Y."/>
            <person name="Yamashita R."/>
            <person name="Nakai K."/>
            <person name="Yada T."/>
            <person name="Nakamura Y."/>
            <person name="Ohara O."/>
            <person name="Isogai T."/>
            <person name="Sugano S."/>
        </authorList>
    </citation>
    <scope>NUCLEOTIDE SEQUENCE [LARGE SCALE MRNA] (ISOFORM 2)</scope>
    <source>
        <tissue>Placenta</tissue>
    </source>
</reference>
<reference key="4">
    <citation type="submission" date="2005-07" db="EMBL/GenBank/DDBJ databases">
        <authorList>
            <person name="Mural R.J."/>
            <person name="Istrail S."/>
            <person name="Sutton G.G."/>
            <person name="Florea L."/>
            <person name="Halpern A.L."/>
            <person name="Mobarry C.M."/>
            <person name="Lippert R."/>
            <person name="Walenz B."/>
            <person name="Shatkay H."/>
            <person name="Dew I."/>
            <person name="Miller J.R."/>
            <person name="Flanigan M.J."/>
            <person name="Edwards N.J."/>
            <person name="Bolanos R."/>
            <person name="Fasulo D."/>
            <person name="Halldorsson B.V."/>
            <person name="Hannenhalli S."/>
            <person name="Turner R."/>
            <person name="Yooseph S."/>
            <person name="Lu F."/>
            <person name="Nusskern D.R."/>
            <person name="Shue B.C."/>
            <person name="Zheng X.H."/>
            <person name="Zhong F."/>
            <person name="Delcher A.L."/>
            <person name="Huson D.H."/>
            <person name="Kravitz S.A."/>
            <person name="Mouchard L."/>
            <person name="Reinert K."/>
            <person name="Remington K.A."/>
            <person name="Clark A.G."/>
            <person name="Waterman M.S."/>
            <person name="Eichler E.E."/>
            <person name="Adams M.D."/>
            <person name="Hunkapiller M.W."/>
            <person name="Myers E.W."/>
            <person name="Venter J.C."/>
        </authorList>
    </citation>
    <scope>NUCLEOTIDE SEQUENCE [LARGE SCALE GENOMIC DNA]</scope>
</reference>
<reference key="5">
    <citation type="journal article" date="2001" name="Biochem. J.">
        <title>A large family of endosome-localized proteins related to sorting nexin 1.</title>
        <authorList>
            <person name="Teasdale R.D."/>
            <person name="Loci D."/>
            <person name="Houghton F."/>
            <person name="Karlsson L."/>
            <person name="Gleeson P.A."/>
        </authorList>
    </citation>
    <scope>NUCLEOTIDE SEQUENCE [MRNA] OF 607-968</scope>
</reference>
<reference key="6">
    <citation type="journal article" date="2004" name="Genome Res.">
        <title>The status, quality, and expansion of the NIH full-length cDNA project: the Mammalian Gene Collection (MGC).</title>
        <authorList>
            <consortium name="The MGC Project Team"/>
        </authorList>
    </citation>
    <scope>NUCLEOTIDE SEQUENCE [LARGE SCALE MRNA] OF 651-968</scope>
    <source>
        <tissue>Placenta</tissue>
    </source>
</reference>
<reference key="7">
    <citation type="journal article" date="2004" name="Genome Biol.">
        <title>An unappreciated role for RNA surveillance.</title>
        <authorList>
            <person name="Hillman R.T."/>
            <person name="Green R.E."/>
            <person name="Brenner S.E."/>
        </authorList>
    </citation>
    <scope>SPLICE ISOFORM(S) THAT ARE POTENTIAL NMD TARGET(S)</scope>
</reference>
<protein>
    <recommendedName>
        <fullName>Sorting nexin-13</fullName>
    </recommendedName>
    <alternativeName>
        <fullName>RGS domain- and PHOX domain-containing protein</fullName>
    </alternativeName>
    <alternativeName>
        <fullName>RGS-PX1</fullName>
    </alternativeName>
</protein>
<name>SNX13_HUMAN</name>
<evidence type="ECO:0000250" key="1"/>
<evidence type="ECO:0000255" key="2">
    <source>
        <dbReference type="PROSITE-ProRule" id="PRU00147"/>
    </source>
</evidence>
<evidence type="ECO:0000255" key="3">
    <source>
        <dbReference type="PROSITE-ProRule" id="PRU00171"/>
    </source>
</evidence>
<evidence type="ECO:0000255" key="4">
    <source>
        <dbReference type="PROSITE-ProRule" id="PRU00553"/>
    </source>
</evidence>
<evidence type="ECO:0000269" key="5">
    <source>
    </source>
</evidence>
<evidence type="ECO:0000303" key="6">
    <source>
    </source>
</evidence>
<evidence type="ECO:0000303" key="7">
    <source>
    </source>
</evidence>
<evidence type="ECO:0000305" key="8"/>
<evidence type="ECO:0007829" key="9">
    <source>
        <dbReference type="PDB" id="7WF6"/>
    </source>
</evidence>
<accession>Q9Y5W8</accession>
<accession>B2RCI9</accession>
<accession>O94821</accession>
<accession>Q8WVZ2</accession>
<accession>Q8WXH8</accession>
<organism>
    <name type="scientific">Homo sapiens</name>
    <name type="common">Human</name>
    <dbReference type="NCBI Taxonomy" id="9606"/>
    <lineage>
        <taxon>Eukaryota</taxon>
        <taxon>Metazoa</taxon>
        <taxon>Chordata</taxon>
        <taxon>Craniata</taxon>
        <taxon>Vertebrata</taxon>
        <taxon>Euteleostomi</taxon>
        <taxon>Mammalia</taxon>
        <taxon>Eutheria</taxon>
        <taxon>Euarchontoglires</taxon>
        <taxon>Primates</taxon>
        <taxon>Haplorrhini</taxon>
        <taxon>Catarrhini</taxon>
        <taxon>Hominidae</taxon>
        <taxon>Homo</taxon>
    </lineage>
</organism>
<sequence>MLTEASLSIWGWGSLGIVLFLITFGPFVIFYLTFYILCFVGGGLVVTLLFGKTNSEKYLEQCEHSFLPPTSPGVPKCLEEMKREARTIKIDRRLTGANIIDEPLQQVIQFSLRDYVQYWYYTLSDDESFLLEIRQTLQNALIQFATRSKEIDWQPYFTTRIVDDFGTHLRVFRKAQQKITEKDDQVKGTAEDLVDTFFEVEVEMEKEVCRDLVCTSPKDEEGFLRDLCEVLLYLLLPPGDFQNKIMRYFVREILARGILLPLINQLSDPDYINQYVIWMIRDSNCNYEAFMNIIKLSDNIGELEAVRDKAAEELQYLRSLDTAGDDINTIKNQINSLLFVKKVCDSRIQRLQSGKEINTVKLAANFGKLCTVPLDSILVDNVALQFFMDYMQQTGGQAHLFFWMTVEGYRVTAQQQLEVLLSRQRDGKHQTNQTKGLLRAAAVGIYEQYLSEKASPRVTVDDYLVAKLADTLNHEDPTPEIFDDIQRKVYELMLRDERFYPSFRQNALYVRMLAELDMLKDPSFRGSDDGDGESFNGSPTGSINLSLDDLSNVSSDDSVQLHAYISDTVYADYDPYAVAGVCNDHGKTYALYAITVHRRNLNSEEMWKTYRRYSDFHDFHMRITEQFESLSSILKLPGKKTFNNMDRDFLEKRKKDLNAYLQLLLAPEMMKASPALAHYVYDFLENKAYSKGKGDFARKMDTFVNPLRNSMRNVSNAVKSLPDSLAEGMTKMSDNMGKMSERLGQDIKQSFFKVPPLIPKTDSDPEHRRVSAQLDDNVDDNIPLRVMLLLMDEVFDLKERNQWLRRNIKNLLQQLIRATYGDTINRKIVDHVDWMTSPEQVADSVKRFRDAFWPNGILAEAVPCRDKSIRMRTRVAGKTKLLAIMPDELKHIIGAETTRKGILRVFEMFQHNQLNRRMVYVFLEGFLETLFPQYKFRELFNKLHSRSKQMQKYKQKLQTTQAPSLQKR</sequence>
<keyword id="KW-0002">3D-structure</keyword>
<keyword id="KW-0025">Alternative splicing</keyword>
<keyword id="KW-0967">Endosome</keyword>
<keyword id="KW-0446">Lipid-binding</keyword>
<keyword id="KW-0472">Membrane</keyword>
<keyword id="KW-0653">Protein transport</keyword>
<keyword id="KW-1267">Proteomics identification</keyword>
<keyword id="KW-1185">Reference proteome</keyword>
<keyword id="KW-0734">Signal transduction inhibitor</keyword>
<keyword id="KW-0813">Transport</keyword>
<dbReference type="EMBL" id="AF420470">
    <property type="protein sequence ID" value="AAL37728.1"/>
    <property type="molecule type" value="mRNA"/>
</dbReference>
<dbReference type="EMBL" id="AB018256">
    <property type="protein sequence ID" value="BAA34433.1"/>
    <property type="status" value="ALT_FRAME"/>
    <property type="molecule type" value="mRNA"/>
</dbReference>
<dbReference type="EMBL" id="AK315135">
    <property type="protein sequence ID" value="BAG37586.1"/>
    <property type="molecule type" value="mRNA"/>
</dbReference>
<dbReference type="EMBL" id="AF121862">
    <property type="protein sequence ID" value="AAD27835.1"/>
    <property type="molecule type" value="mRNA"/>
</dbReference>
<dbReference type="EMBL" id="CH471073">
    <property type="protein sequence ID" value="EAW93690.1"/>
    <property type="molecule type" value="Genomic_DNA"/>
</dbReference>
<dbReference type="EMBL" id="BC022060">
    <property type="protein sequence ID" value="AAH22060.1"/>
    <property type="status" value="ALT_INIT"/>
    <property type="molecule type" value="mRNA"/>
</dbReference>
<dbReference type="CCDS" id="CCDS47551.1">
    <molecule id="Q9Y5W8-2"/>
</dbReference>
<dbReference type="RefSeq" id="NP_001337791.1">
    <molecule id="Q9Y5W8-1"/>
    <property type="nucleotide sequence ID" value="NM_001350862.2"/>
</dbReference>
<dbReference type="RefSeq" id="NP_055947.1">
    <molecule id="Q9Y5W8-2"/>
    <property type="nucleotide sequence ID" value="NM_015132.5"/>
</dbReference>
<dbReference type="RefSeq" id="XP_005249729.1">
    <property type="nucleotide sequence ID" value="XM_005249672.1"/>
</dbReference>
<dbReference type="PDB" id="7WF6">
    <property type="method" value="X-ray"/>
    <property type="resolution" value="3.25 A"/>
    <property type="chains" value="A=372-516"/>
</dbReference>
<dbReference type="PDBsum" id="7WF6"/>
<dbReference type="SMR" id="Q9Y5W8"/>
<dbReference type="BioGRID" id="116773">
    <property type="interactions" value="21"/>
</dbReference>
<dbReference type="FunCoup" id="Q9Y5W8">
    <property type="interactions" value="1646"/>
</dbReference>
<dbReference type="IntAct" id="Q9Y5W8">
    <property type="interactions" value="16"/>
</dbReference>
<dbReference type="STRING" id="9606.ENSP00000398789"/>
<dbReference type="TCDB" id="3.A.34.1.1">
    <property type="family name" value="the sorting nexins of the escrt complexes (sn-escrt)"/>
</dbReference>
<dbReference type="GlyCosmos" id="Q9Y5W8">
    <property type="glycosylation" value="2 sites, 1 glycan"/>
</dbReference>
<dbReference type="GlyGen" id="Q9Y5W8">
    <property type="glycosylation" value="3 sites, 1 O-linked glycan (2 sites)"/>
</dbReference>
<dbReference type="iPTMnet" id="Q9Y5W8"/>
<dbReference type="PhosphoSitePlus" id="Q9Y5W8"/>
<dbReference type="BioMuta" id="SNX13"/>
<dbReference type="DMDM" id="24418867"/>
<dbReference type="jPOST" id="Q9Y5W8"/>
<dbReference type="MassIVE" id="Q9Y5W8"/>
<dbReference type="PaxDb" id="9606-ENSP00000398789"/>
<dbReference type="PeptideAtlas" id="Q9Y5W8"/>
<dbReference type="ProteomicsDB" id="86522">
    <molecule id="Q9Y5W8-1"/>
</dbReference>
<dbReference type="ProteomicsDB" id="86523">
    <molecule id="Q9Y5W8-2"/>
</dbReference>
<dbReference type="Pumba" id="Q9Y5W8"/>
<dbReference type="Antibodypedia" id="25298">
    <property type="antibodies" value="93 antibodies from 23 providers"/>
</dbReference>
<dbReference type="DNASU" id="23161"/>
<dbReference type="Ensembl" id="ENST00000428135.7">
    <molecule id="Q9Y5W8-2"/>
    <property type="protein sequence ID" value="ENSP00000398789.2"/>
    <property type="gene ID" value="ENSG00000071189.21"/>
</dbReference>
<dbReference type="GeneID" id="23161"/>
<dbReference type="KEGG" id="hsa:23161"/>
<dbReference type="MANE-Select" id="ENST00000428135.7">
    <molecule id="Q9Y5W8-2"/>
    <property type="protein sequence ID" value="ENSP00000398789.2"/>
    <property type="RefSeq nucleotide sequence ID" value="NM_015132.5"/>
    <property type="RefSeq protein sequence ID" value="NP_055947.1"/>
</dbReference>
<dbReference type="UCSC" id="uc003stv.4">
    <molecule id="Q9Y5W8-1"/>
    <property type="organism name" value="human"/>
</dbReference>
<dbReference type="AGR" id="HGNC:21335"/>
<dbReference type="CTD" id="23161"/>
<dbReference type="DisGeNET" id="23161"/>
<dbReference type="GeneCards" id="SNX13"/>
<dbReference type="HGNC" id="HGNC:21335">
    <property type="gene designation" value="SNX13"/>
</dbReference>
<dbReference type="HPA" id="ENSG00000071189">
    <property type="expression patterns" value="Low tissue specificity"/>
</dbReference>
<dbReference type="MIM" id="606589">
    <property type="type" value="gene"/>
</dbReference>
<dbReference type="neXtProt" id="NX_Q9Y5W8"/>
<dbReference type="OpenTargets" id="ENSG00000071189"/>
<dbReference type="PharmGKB" id="PA129697240"/>
<dbReference type="VEuPathDB" id="HostDB:ENSG00000071189"/>
<dbReference type="eggNOG" id="KOG2101">
    <property type="taxonomic scope" value="Eukaryota"/>
</dbReference>
<dbReference type="GeneTree" id="ENSGT00950000182856"/>
<dbReference type="HOGENOM" id="CLU_005899_1_0_1"/>
<dbReference type="InParanoid" id="Q9Y5W8"/>
<dbReference type="OMA" id="CETINNT"/>
<dbReference type="OrthoDB" id="5772781at2759"/>
<dbReference type="PAN-GO" id="Q9Y5W8">
    <property type="GO annotations" value="2 GO annotations based on evolutionary models"/>
</dbReference>
<dbReference type="PhylomeDB" id="Q9Y5W8"/>
<dbReference type="TreeFam" id="TF324055"/>
<dbReference type="PathwayCommons" id="Q9Y5W8"/>
<dbReference type="SignaLink" id="Q9Y5W8"/>
<dbReference type="BioGRID-ORCS" id="23161">
    <property type="hits" value="37 hits in 1157 CRISPR screens"/>
</dbReference>
<dbReference type="ChiTaRS" id="SNX13">
    <property type="organism name" value="human"/>
</dbReference>
<dbReference type="GeneWiki" id="SNX13"/>
<dbReference type="GenomeRNAi" id="23161"/>
<dbReference type="Pharos" id="Q9Y5W8">
    <property type="development level" value="Tbio"/>
</dbReference>
<dbReference type="PRO" id="PR:Q9Y5W8"/>
<dbReference type="Proteomes" id="UP000005640">
    <property type="component" value="Chromosome 7"/>
</dbReference>
<dbReference type="RNAct" id="Q9Y5W8">
    <property type="molecule type" value="protein"/>
</dbReference>
<dbReference type="Bgee" id="ENSG00000071189">
    <property type="expression patterns" value="Expressed in sperm and 201 other cell types or tissues"/>
</dbReference>
<dbReference type="ExpressionAtlas" id="Q9Y5W8">
    <property type="expression patterns" value="baseline and differential"/>
</dbReference>
<dbReference type="GO" id="GO:0005769">
    <property type="term" value="C:early endosome"/>
    <property type="evidence" value="ECO:0000314"/>
    <property type="project" value="UniProtKB"/>
</dbReference>
<dbReference type="GO" id="GO:0031901">
    <property type="term" value="C:early endosome membrane"/>
    <property type="evidence" value="ECO:0007669"/>
    <property type="project" value="UniProtKB-SubCell"/>
</dbReference>
<dbReference type="GO" id="GO:0035091">
    <property type="term" value="F:phosphatidylinositol binding"/>
    <property type="evidence" value="ECO:0000314"/>
    <property type="project" value="UniProtKB"/>
</dbReference>
<dbReference type="GO" id="GO:0032266">
    <property type="term" value="F:phosphatidylinositol-3-phosphate binding"/>
    <property type="evidence" value="ECO:0000314"/>
    <property type="project" value="GO_Central"/>
</dbReference>
<dbReference type="GO" id="GO:0006886">
    <property type="term" value="P:intracellular protein transport"/>
    <property type="evidence" value="ECO:0000315"/>
    <property type="project" value="UniProtKB"/>
</dbReference>
<dbReference type="GO" id="GO:0009968">
    <property type="term" value="P:negative regulation of signal transduction"/>
    <property type="evidence" value="ECO:0007669"/>
    <property type="project" value="UniProtKB-KW"/>
</dbReference>
<dbReference type="GO" id="GO:0043547">
    <property type="term" value="P:positive regulation of GTPase activity"/>
    <property type="evidence" value="ECO:0000314"/>
    <property type="project" value="UniProtKB"/>
</dbReference>
<dbReference type="CDD" id="cd06873">
    <property type="entry name" value="PX_SNX13"/>
    <property type="match status" value="1"/>
</dbReference>
<dbReference type="CDD" id="cd08719">
    <property type="entry name" value="RGS_SNX13"/>
    <property type="match status" value="1"/>
</dbReference>
<dbReference type="FunFam" id="3.30.1520.10:FF:000014">
    <property type="entry name" value="Sorting nexin 13"/>
    <property type="match status" value="1"/>
</dbReference>
<dbReference type="FunFam" id="1.10.167.10:FF:000007">
    <property type="entry name" value="sorting nexin-13 isoform X1"/>
    <property type="match status" value="1"/>
</dbReference>
<dbReference type="Gene3D" id="3.30.1520.10">
    <property type="entry name" value="Phox-like domain"/>
    <property type="match status" value="1"/>
</dbReference>
<dbReference type="Gene3D" id="1.10.167.10">
    <property type="entry name" value="Regulator of G-protein Signalling 4, domain 2"/>
    <property type="match status" value="1"/>
</dbReference>
<dbReference type="InterPro" id="IPR003114">
    <property type="entry name" value="Phox_assoc"/>
</dbReference>
<dbReference type="InterPro" id="IPR001683">
    <property type="entry name" value="PX_dom"/>
</dbReference>
<dbReference type="InterPro" id="IPR036871">
    <property type="entry name" value="PX_dom_sf"/>
</dbReference>
<dbReference type="InterPro" id="IPR016137">
    <property type="entry name" value="RGS"/>
</dbReference>
<dbReference type="InterPro" id="IPR036305">
    <property type="entry name" value="RGS_sf"/>
</dbReference>
<dbReference type="InterPro" id="IPR044926">
    <property type="entry name" value="RGS_subdomain_2"/>
</dbReference>
<dbReference type="InterPro" id="IPR037437">
    <property type="entry name" value="SNX13_PX"/>
</dbReference>
<dbReference type="InterPro" id="IPR037896">
    <property type="entry name" value="SNX13_RGS"/>
</dbReference>
<dbReference type="InterPro" id="IPR013937">
    <property type="entry name" value="Sorting_nexin_C"/>
</dbReference>
<dbReference type="PANTHER" id="PTHR22775">
    <property type="entry name" value="SORTING NEXIN"/>
    <property type="match status" value="1"/>
</dbReference>
<dbReference type="PANTHER" id="PTHR22775:SF3">
    <property type="entry name" value="SORTING NEXIN-13"/>
    <property type="match status" value="1"/>
</dbReference>
<dbReference type="Pfam" id="PF08628">
    <property type="entry name" value="Nexin_C"/>
    <property type="match status" value="1"/>
</dbReference>
<dbReference type="Pfam" id="PF00787">
    <property type="entry name" value="PX"/>
    <property type="match status" value="1"/>
</dbReference>
<dbReference type="Pfam" id="PF02194">
    <property type="entry name" value="PXA"/>
    <property type="match status" value="1"/>
</dbReference>
<dbReference type="Pfam" id="PF00615">
    <property type="entry name" value="RGS"/>
    <property type="match status" value="1"/>
</dbReference>
<dbReference type="SMART" id="SM00312">
    <property type="entry name" value="PX"/>
    <property type="match status" value="1"/>
</dbReference>
<dbReference type="SMART" id="SM00313">
    <property type="entry name" value="PXA"/>
    <property type="match status" value="1"/>
</dbReference>
<dbReference type="SMART" id="SM00315">
    <property type="entry name" value="RGS"/>
    <property type="match status" value="1"/>
</dbReference>
<dbReference type="SUPFAM" id="SSF64268">
    <property type="entry name" value="PX domain"/>
    <property type="match status" value="1"/>
</dbReference>
<dbReference type="SUPFAM" id="SSF48097">
    <property type="entry name" value="Regulator of G-protein signaling, RGS"/>
    <property type="match status" value="1"/>
</dbReference>
<dbReference type="PROSITE" id="PS50195">
    <property type="entry name" value="PX"/>
    <property type="match status" value="1"/>
</dbReference>
<dbReference type="PROSITE" id="PS51207">
    <property type="entry name" value="PXA"/>
    <property type="match status" value="1"/>
</dbReference>
<dbReference type="PROSITE" id="PS50132">
    <property type="entry name" value="RGS"/>
    <property type="match status" value="1"/>
</dbReference>
<proteinExistence type="evidence at protein level"/>
<feature type="chain" id="PRO_0000213860" description="Sorting nexin-13">
    <location>
        <begin position="1"/>
        <end position="968"/>
    </location>
</feature>
<feature type="domain" description="PXA" evidence="2 4">
    <location>
        <begin position="97"/>
        <end position="284"/>
    </location>
</feature>
<feature type="domain" description="RGS" evidence="3">
    <location>
        <begin position="373"/>
        <end position="496"/>
    </location>
</feature>
<feature type="domain" description="PX" evidence="2">
    <location>
        <begin position="570"/>
        <end position="691"/>
    </location>
</feature>
<feature type="binding site" evidence="1">
    <location>
        <position position="612"/>
    </location>
    <ligand>
        <name>a 1,2-diacyl-sn-glycero-3-phospho-(1D-myo-inositol-3-phosphate)</name>
        <dbReference type="ChEBI" id="CHEBI:58088"/>
    </ligand>
</feature>
<feature type="binding site" evidence="1">
    <location>
        <position position="614"/>
    </location>
    <ligand>
        <name>a 1,2-diacyl-sn-glycero-3-phospho-(1D-myo-inositol-3-phosphate)</name>
        <dbReference type="ChEBI" id="CHEBI:58088"/>
    </ligand>
</feature>
<feature type="binding site" evidence="1">
    <location>
        <position position="639"/>
    </location>
    <ligand>
        <name>a 1,2-diacyl-sn-glycero-3-phospho-(1D-myo-inositol-3-phosphate)</name>
        <dbReference type="ChEBI" id="CHEBI:58088"/>
    </ligand>
</feature>
<feature type="binding site" evidence="1">
    <location>
        <position position="653"/>
    </location>
    <ligand>
        <name>a 1,2-diacyl-sn-glycero-3-phospho-(1D-myo-inositol-3-phosphate)</name>
        <dbReference type="ChEBI" id="CHEBI:58088"/>
    </ligand>
</feature>
<feature type="splice variant" id="VSP_006192" description="In isoform 2." evidence="6 7">
    <location>
        <begin position="569"/>
        <end position="579"/>
    </location>
</feature>
<feature type="sequence variant" id="VAR_057333" description="In dbSNP:rs35113148.">
    <original>L</original>
    <variation>S</variation>
    <location>
        <position position="472"/>
    </location>
</feature>
<feature type="sequence conflict" description="In Ref. 1; BAA34433." evidence="8" ref="1">
    <original>G</original>
    <variation>E</variation>
    <location>
        <position position="638"/>
    </location>
</feature>
<feature type="helix" evidence="9">
    <location>
        <begin position="374"/>
        <end position="377"/>
    </location>
</feature>
<feature type="helix" evidence="9">
    <location>
        <begin position="381"/>
        <end position="394"/>
    </location>
</feature>
<feature type="helix" evidence="9">
    <location>
        <begin position="397"/>
        <end position="419"/>
    </location>
</feature>
<feature type="helix" evidence="9">
    <location>
        <begin position="431"/>
        <end position="448"/>
    </location>
</feature>
<feature type="strand" evidence="9">
    <location>
        <begin position="451"/>
        <end position="453"/>
    </location>
</feature>
<feature type="helix" evidence="9">
    <location>
        <begin position="462"/>
        <end position="473"/>
    </location>
</feature>
<feature type="turn" evidence="9">
    <location>
        <begin position="479"/>
        <end position="482"/>
    </location>
</feature>
<feature type="helix" evidence="9">
    <location>
        <begin position="483"/>
        <end position="495"/>
    </location>
</feature>
<feature type="helix" evidence="9">
    <location>
        <begin position="500"/>
        <end position="503"/>
    </location>
</feature>
<feature type="helix" evidence="9">
    <location>
        <begin position="507"/>
        <end position="512"/>
    </location>
</feature>
<feature type="turn" evidence="9">
    <location>
        <begin position="513"/>
        <end position="516"/>
    </location>
</feature>